<accession>B9KDZ7</accession>
<comment type="function">
    <text evidence="1">Involved in protein export. Acts as a chaperone by maintaining the newly synthesized protein in an open conformation. Functions as a peptidyl-prolyl cis-trans isomerase.</text>
</comment>
<comment type="catalytic activity">
    <reaction evidence="1">
        <text>[protein]-peptidylproline (omega=180) = [protein]-peptidylproline (omega=0)</text>
        <dbReference type="Rhea" id="RHEA:16237"/>
        <dbReference type="Rhea" id="RHEA-COMP:10747"/>
        <dbReference type="Rhea" id="RHEA-COMP:10748"/>
        <dbReference type="ChEBI" id="CHEBI:83833"/>
        <dbReference type="ChEBI" id="CHEBI:83834"/>
        <dbReference type="EC" id="5.2.1.8"/>
    </reaction>
</comment>
<comment type="subcellular location">
    <subcellularLocation>
        <location>Cytoplasm</location>
    </subcellularLocation>
    <text evidence="1">About half TF is bound to the ribosome near the polypeptide exit tunnel while the other half is free in the cytoplasm.</text>
</comment>
<comment type="domain">
    <text evidence="1">Consists of 3 domains; the N-terminus binds the ribosome, the middle domain has PPIase activity, while the C-terminus has intrinsic chaperone activity on its own.</text>
</comment>
<comment type="similarity">
    <text evidence="1">Belongs to the FKBP-type PPIase family. Tig subfamily.</text>
</comment>
<dbReference type="EC" id="5.2.1.8" evidence="1"/>
<dbReference type="EMBL" id="CP000932">
    <property type="protein sequence ID" value="ACM64785.1"/>
    <property type="molecule type" value="Genomic_DNA"/>
</dbReference>
<dbReference type="RefSeq" id="WP_012662168.1">
    <property type="nucleotide sequence ID" value="NC_012039.1"/>
</dbReference>
<dbReference type="SMR" id="B9KDZ7"/>
<dbReference type="STRING" id="306263.Cla_1480"/>
<dbReference type="GeneID" id="93005508"/>
<dbReference type="KEGG" id="cla:CLA_1480"/>
<dbReference type="PATRIC" id="fig|306263.5.peg.1461"/>
<dbReference type="eggNOG" id="COG0544">
    <property type="taxonomic scope" value="Bacteria"/>
</dbReference>
<dbReference type="HOGENOM" id="CLU_033058_2_2_7"/>
<dbReference type="Proteomes" id="UP000007727">
    <property type="component" value="Chromosome"/>
</dbReference>
<dbReference type="GO" id="GO:0005737">
    <property type="term" value="C:cytoplasm"/>
    <property type="evidence" value="ECO:0007669"/>
    <property type="project" value="UniProtKB-SubCell"/>
</dbReference>
<dbReference type="GO" id="GO:0003755">
    <property type="term" value="F:peptidyl-prolyl cis-trans isomerase activity"/>
    <property type="evidence" value="ECO:0007669"/>
    <property type="project" value="UniProtKB-UniRule"/>
</dbReference>
<dbReference type="GO" id="GO:0051301">
    <property type="term" value="P:cell division"/>
    <property type="evidence" value="ECO:0007669"/>
    <property type="project" value="UniProtKB-KW"/>
</dbReference>
<dbReference type="GO" id="GO:0006457">
    <property type="term" value="P:protein folding"/>
    <property type="evidence" value="ECO:0007669"/>
    <property type="project" value="UniProtKB-UniRule"/>
</dbReference>
<dbReference type="GO" id="GO:0015031">
    <property type="term" value="P:protein transport"/>
    <property type="evidence" value="ECO:0007669"/>
    <property type="project" value="UniProtKB-UniRule"/>
</dbReference>
<dbReference type="FunFam" id="3.10.50.40:FF:000001">
    <property type="entry name" value="Trigger factor"/>
    <property type="match status" value="1"/>
</dbReference>
<dbReference type="Gene3D" id="3.10.50.40">
    <property type="match status" value="1"/>
</dbReference>
<dbReference type="Gene3D" id="3.30.70.1050">
    <property type="entry name" value="Trigger factor ribosome-binding domain"/>
    <property type="match status" value="1"/>
</dbReference>
<dbReference type="Gene3D" id="1.10.3120.10">
    <property type="entry name" value="Trigger factor, C-terminal domain"/>
    <property type="match status" value="1"/>
</dbReference>
<dbReference type="HAMAP" id="MF_00303">
    <property type="entry name" value="Trigger_factor_Tig"/>
    <property type="match status" value="1"/>
</dbReference>
<dbReference type="InterPro" id="IPR046357">
    <property type="entry name" value="PPIase_dom_sf"/>
</dbReference>
<dbReference type="InterPro" id="IPR001179">
    <property type="entry name" value="PPIase_FKBP_dom"/>
</dbReference>
<dbReference type="InterPro" id="IPR005215">
    <property type="entry name" value="Trig_fac"/>
</dbReference>
<dbReference type="InterPro" id="IPR008880">
    <property type="entry name" value="Trigger_fac_C"/>
</dbReference>
<dbReference type="InterPro" id="IPR037041">
    <property type="entry name" value="Trigger_fac_C_sf"/>
</dbReference>
<dbReference type="InterPro" id="IPR008881">
    <property type="entry name" value="Trigger_fac_ribosome-bd_bac"/>
</dbReference>
<dbReference type="InterPro" id="IPR036611">
    <property type="entry name" value="Trigger_fac_ribosome-bd_sf"/>
</dbReference>
<dbReference type="InterPro" id="IPR027304">
    <property type="entry name" value="Trigger_fact/SurA_dom_sf"/>
</dbReference>
<dbReference type="NCBIfam" id="TIGR00115">
    <property type="entry name" value="tig"/>
    <property type="match status" value="1"/>
</dbReference>
<dbReference type="Pfam" id="PF00254">
    <property type="entry name" value="FKBP_C"/>
    <property type="match status" value="1"/>
</dbReference>
<dbReference type="Pfam" id="PF05698">
    <property type="entry name" value="Trigger_C"/>
    <property type="match status" value="1"/>
</dbReference>
<dbReference type="Pfam" id="PF05697">
    <property type="entry name" value="Trigger_N"/>
    <property type="match status" value="1"/>
</dbReference>
<dbReference type="PIRSF" id="PIRSF003095">
    <property type="entry name" value="Trigger_factor"/>
    <property type="match status" value="1"/>
</dbReference>
<dbReference type="SUPFAM" id="SSF54534">
    <property type="entry name" value="FKBP-like"/>
    <property type="match status" value="1"/>
</dbReference>
<dbReference type="SUPFAM" id="SSF109998">
    <property type="entry name" value="Triger factor/SurA peptide-binding domain-like"/>
    <property type="match status" value="1"/>
</dbReference>
<dbReference type="SUPFAM" id="SSF102735">
    <property type="entry name" value="Trigger factor ribosome-binding domain"/>
    <property type="match status" value="1"/>
</dbReference>
<dbReference type="PROSITE" id="PS50059">
    <property type="entry name" value="FKBP_PPIASE"/>
    <property type="match status" value="1"/>
</dbReference>
<sequence>MEVTAKLIDFANANATVKIAQGAIKAEVEKLAKKASKTMKMDGFRAGKVPVAAILKRYEKELTRDAEQDLLRNAVDGALKEVKKDAKDLVGEPYFEKFDRKDGAIEAQMVLSFRPEVKLDGYEELVPTYNTPKVTQKEIDAKKEELLKRFATPEAIKEDRALKEGDFAKFDFEGFVDGKAFDGGKAQNYVLEIGSKQFIPGFEEGMIGLKIGEEKDINVTFPKEYGATHLAGKDAVFKVKLHEIQELKLPELNEELLKSLLPEEKEPSVEKLEAKLKEQLKNEKIFKLINDELKNQFAEALVAKFDFVLPKNIVEQETDMQFRSSLRNLSEEELKEFKDEAKYKEKRESFKEDAQKSVKLTFIIDELAKLRNVTVSDQELIQAIYFEAYRYGFNPQEHLDNYKKQGALPAIKMSLIEEKLFADIFKKNDKKKTEKESEK</sequence>
<proteinExistence type="inferred from homology"/>
<organism>
    <name type="scientific">Campylobacter lari (strain RM2100 / D67 / ATCC BAA-1060)</name>
    <dbReference type="NCBI Taxonomy" id="306263"/>
    <lineage>
        <taxon>Bacteria</taxon>
        <taxon>Pseudomonadati</taxon>
        <taxon>Campylobacterota</taxon>
        <taxon>Epsilonproteobacteria</taxon>
        <taxon>Campylobacterales</taxon>
        <taxon>Campylobacteraceae</taxon>
        <taxon>Campylobacter</taxon>
    </lineage>
</organism>
<gene>
    <name evidence="1" type="primary">tig</name>
    <name type="ordered locus">Cla_1480</name>
</gene>
<evidence type="ECO:0000255" key="1">
    <source>
        <dbReference type="HAMAP-Rule" id="MF_00303"/>
    </source>
</evidence>
<name>TIG_CAMLR</name>
<keyword id="KW-0131">Cell cycle</keyword>
<keyword id="KW-0132">Cell division</keyword>
<keyword id="KW-0143">Chaperone</keyword>
<keyword id="KW-0963">Cytoplasm</keyword>
<keyword id="KW-0413">Isomerase</keyword>
<keyword id="KW-1185">Reference proteome</keyword>
<keyword id="KW-0697">Rotamase</keyword>
<protein>
    <recommendedName>
        <fullName evidence="1">Trigger factor</fullName>
        <shortName evidence="1">TF</shortName>
        <ecNumber evidence="1">5.2.1.8</ecNumber>
    </recommendedName>
    <alternativeName>
        <fullName evidence="1">PPIase</fullName>
    </alternativeName>
</protein>
<reference key="1">
    <citation type="journal article" date="2008" name="Foodborne Pathog. Dis.">
        <title>The complete genome sequence and analysis of the human pathogen Campylobacter lari.</title>
        <authorList>
            <person name="Miller W.G."/>
            <person name="Wang G."/>
            <person name="Binnewies T.T."/>
            <person name="Parker C.T."/>
        </authorList>
    </citation>
    <scope>NUCLEOTIDE SEQUENCE [LARGE SCALE GENOMIC DNA]</scope>
    <source>
        <strain>RM2100 / D67 / ATCC BAA-1060</strain>
    </source>
</reference>
<feature type="chain" id="PRO_1000198149" description="Trigger factor">
    <location>
        <begin position="1"/>
        <end position="439"/>
    </location>
</feature>
<feature type="domain" description="PPIase FKBP-type" evidence="1">
    <location>
        <begin position="165"/>
        <end position="250"/>
    </location>
</feature>